<reference key="1">
    <citation type="journal article" date="2006" name="J. Bacteriol.">
        <title>Pathogenomic sequence analysis of Bacillus cereus and Bacillus thuringiensis isolates closely related to Bacillus anthracis.</title>
        <authorList>
            <person name="Han C.S."/>
            <person name="Xie G."/>
            <person name="Challacombe J.F."/>
            <person name="Altherr M.R."/>
            <person name="Bhotika S.S."/>
            <person name="Bruce D."/>
            <person name="Campbell C.S."/>
            <person name="Campbell M.L."/>
            <person name="Chen J."/>
            <person name="Chertkov O."/>
            <person name="Cleland C."/>
            <person name="Dimitrijevic M."/>
            <person name="Doggett N.A."/>
            <person name="Fawcett J.J."/>
            <person name="Glavina T."/>
            <person name="Goodwin L.A."/>
            <person name="Hill K.K."/>
            <person name="Hitchcock P."/>
            <person name="Jackson P.J."/>
            <person name="Keim P."/>
            <person name="Kewalramani A.R."/>
            <person name="Longmire J."/>
            <person name="Lucas S."/>
            <person name="Malfatti S."/>
            <person name="McMurry K."/>
            <person name="Meincke L.J."/>
            <person name="Misra M."/>
            <person name="Moseman B.L."/>
            <person name="Mundt M."/>
            <person name="Munk A.C."/>
            <person name="Okinaka R.T."/>
            <person name="Parson-Quintana B."/>
            <person name="Reilly L.P."/>
            <person name="Richardson P."/>
            <person name="Robinson D.L."/>
            <person name="Rubin E."/>
            <person name="Saunders E."/>
            <person name="Tapia R."/>
            <person name="Tesmer J.G."/>
            <person name="Thayer N."/>
            <person name="Thompson L.S."/>
            <person name="Tice H."/>
            <person name="Ticknor L.O."/>
            <person name="Wills P.L."/>
            <person name="Brettin T.S."/>
            <person name="Gilna P."/>
        </authorList>
    </citation>
    <scope>NUCLEOTIDE SEQUENCE [LARGE SCALE GENOMIC DNA]</scope>
    <source>
        <strain>ZK / E33L</strain>
    </source>
</reference>
<feature type="chain" id="PRO_0000050219" description="Putative regulatory protein BCE33L3631">
    <location>
        <begin position="1"/>
        <end position="87"/>
    </location>
</feature>
<evidence type="ECO:0000255" key="1">
    <source>
        <dbReference type="HAMAP-Rule" id="MF_01503"/>
    </source>
</evidence>
<protein>
    <recommendedName>
        <fullName evidence="1">Putative regulatory protein BCE33L3631</fullName>
    </recommendedName>
</protein>
<name>Y3631_BACCZ</name>
<sequence length="87" mass="9647">MAMRFLNIGYGNIVSAHRIIAIVSPESAPIKRTVQEAREHNALLDATYGRKTRAVIVMDDGHVVLSPIQPETIAHRLNNKEDLSEEG</sequence>
<accession>Q636F4</accession>
<comment type="similarity">
    <text evidence="1">Belongs to the RemA family.</text>
</comment>
<gene>
    <name type="ordered locus">BCE33L3631</name>
</gene>
<proteinExistence type="inferred from homology"/>
<organism>
    <name type="scientific">Bacillus cereus (strain ZK / E33L)</name>
    <dbReference type="NCBI Taxonomy" id="288681"/>
    <lineage>
        <taxon>Bacteria</taxon>
        <taxon>Bacillati</taxon>
        <taxon>Bacillota</taxon>
        <taxon>Bacilli</taxon>
        <taxon>Bacillales</taxon>
        <taxon>Bacillaceae</taxon>
        <taxon>Bacillus</taxon>
        <taxon>Bacillus cereus group</taxon>
    </lineage>
</organism>
<dbReference type="EMBL" id="CP000001">
    <property type="protein sequence ID" value="AAU16635.1"/>
    <property type="molecule type" value="Genomic_DNA"/>
</dbReference>
<dbReference type="SMR" id="Q636F4"/>
<dbReference type="KEGG" id="bcz:BCE33L3631"/>
<dbReference type="PATRIC" id="fig|288681.22.peg.1780"/>
<dbReference type="Proteomes" id="UP000002612">
    <property type="component" value="Chromosome"/>
</dbReference>
<dbReference type="HAMAP" id="MF_01503">
    <property type="entry name" value="RemA"/>
    <property type="match status" value="1"/>
</dbReference>
<dbReference type="InterPro" id="IPR007169">
    <property type="entry name" value="RemA-like"/>
</dbReference>
<dbReference type="NCBIfam" id="NF046064">
    <property type="entry name" value="MtxBflmRegRemA"/>
    <property type="match status" value="1"/>
</dbReference>
<dbReference type="NCBIfam" id="NF003315">
    <property type="entry name" value="PRK04323.1"/>
    <property type="match status" value="1"/>
</dbReference>
<dbReference type="PANTHER" id="PTHR38449:SF1">
    <property type="entry name" value="REGULATORY PROTEIN SSL2874-RELATED"/>
    <property type="match status" value="1"/>
</dbReference>
<dbReference type="PANTHER" id="PTHR38449">
    <property type="entry name" value="REGULATORY PROTEIN TM_1690-RELATED"/>
    <property type="match status" value="1"/>
</dbReference>
<dbReference type="Pfam" id="PF04025">
    <property type="entry name" value="RemA-like"/>
    <property type="match status" value="1"/>
</dbReference>